<sequence length="313" mass="35116">MASPSNDSTAPVSEFLLICFPNFQSWQHWLSLPLSLLFLLAMGANTTLLITIQLEASLHQPLYYLLSLLSLLDIVLCLTVIPKVLAIFWFDLRSISFPACFLQMFIMNSFLTMESCTFMVMAYDRYVAICHPLRYPSIITDQFVARAVVFVIARNAFVSLPVPMLSARLRYCAGNIIKNCICSNLSVSKLSCDDITFNQLYQFVAGWTLLGSDLILIVISYSFILKVVLRIKAEGAVAKALSTCGSHFILILFFSTVLLVLVITNLARKRIPPDVPILLNILHHLIPPALNPIVYGVRTKEIKQGIQNLLKRL</sequence>
<evidence type="ECO:0000255" key="1"/>
<evidence type="ECO:0000255" key="2">
    <source>
        <dbReference type="PROSITE-ProRule" id="PRU00521"/>
    </source>
</evidence>
<evidence type="ECO:0000305" key="3"/>
<feature type="chain" id="PRO_0000150795" description="Olfactory receptor 56A4">
    <location>
        <begin position="1"/>
        <end position="313"/>
    </location>
</feature>
<feature type="topological domain" description="Extracellular" evidence="1">
    <location>
        <begin position="1"/>
        <end position="28"/>
    </location>
</feature>
<feature type="transmembrane region" description="Helical; Name=1" evidence="1">
    <location>
        <begin position="29"/>
        <end position="49"/>
    </location>
</feature>
<feature type="topological domain" description="Cytoplasmic" evidence="1">
    <location>
        <begin position="50"/>
        <end position="57"/>
    </location>
</feature>
<feature type="transmembrane region" description="Helical; Name=2" evidence="1">
    <location>
        <begin position="58"/>
        <end position="78"/>
    </location>
</feature>
<feature type="topological domain" description="Extracellular" evidence="1">
    <location>
        <begin position="79"/>
        <end position="102"/>
    </location>
</feature>
<feature type="transmembrane region" description="Helical; Name=3" evidence="1">
    <location>
        <begin position="103"/>
        <end position="123"/>
    </location>
</feature>
<feature type="topological domain" description="Cytoplasmic" evidence="1">
    <location>
        <begin position="124"/>
        <end position="142"/>
    </location>
</feature>
<feature type="transmembrane region" description="Helical; Name=4" evidence="1">
    <location>
        <begin position="143"/>
        <end position="163"/>
    </location>
</feature>
<feature type="topological domain" description="Extracellular" evidence="1">
    <location>
        <begin position="164"/>
        <end position="199"/>
    </location>
</feature>
<feature type="transmembrane region" description="Helical; Name=5" evidence="1">
    <location>
        <begin position="200"/>
        <end position="220"/>
    </location>
</feature>
<feature type="topological domain" description="Cytoplasmic" evidence="1">
    <location>
        <begin position="221"/>
        <end position="240"/>
    </location>
</feature>
<feature type="transmembrane region" description="Helical; Name=6" evidence="1">
    <location>
        <begin position="241"/>
        <end position="261"/>
    </location>
</feature>
<feature type="topological domain" description="Extracellular" evidence="1">
    <location>
        <begin position="262"/>
        <end position="276"/>
    </location>
</feature>
<feature type="transmembrane region" description="Helical; Name=7" evidence="1">
    <location>
        <begin position="277"/>
        <end position="297"/>
    </location>
</feature>
<feature type="topological domain" description="Cytoplasmic" evidence="1">
    <location>
        <begin position="298"/>
        <end position="313"/>
    </location>
</feature>
<feature type="glycosylation site" description="N-linked (GlcNAc...) asparagine" evidence="1">
    <location>
        <position position="6"/>
    </location>
</feature>
<feature type="glycosylation site" description="N-linked (GlcNAc...) asparagine" evidence="1">
    <location>
        <position position="184"/>
    </location>
</feature>
<feature type="disulfide bond" evidence="2">
    <location>
        <begin position="100"/>
        <end position="192"/>
    </location>
</feature>
<feature type="sequence conflict" description="In Ref. 1; BAC06037." evidence="3" ref="1">
    <original>S</original>
    <variation>N</variation>
    <location>
        <position position="5"/>
    </location>
</feature>
<organism>
    <name type="scientific">Homo sapiens</name>
    <name type="common">Human</name>
    <dbReference type="NCBI Taxonomy" id="9606"/>
    <lineage>
        <taxon>Eukaryota</taxon>
        <taxon>Metazoa</taxon>
        <taxon>Chordata</taxon>
        <taxon>Craniata</taxon>
        <taxon>Vertebrata</taxon>
        <taxon>Euteleostomi</taxon>
        <taxon>Mammalia</taxon>
        <taxon>Eutheria</taxon>
        <taxon>Euarchontoglires</taxon>
        <taxon>Primates</taxon>
        <taxon>Haplorrhini</taxon>
        <taxon>Catarrhini</taxon>
        <taxon>Hominidae</taxon>
        <taxon>Homo</taxon>
    </lineage>
</organism>
<protein>
    <recommendedName>
        <fullName>Olfactory receptor 56A4</fullName>
    </recommendedName>
    <alternativeName>
        <fullName>Olfactory receptor OR11-49</fullName>
    </alternativeName>
</protein>
<dbReference type="EMBL" id="AB065818">
    <property type="protein sequence ID" value="BAC06037.1"/>
    <property type="molecule type" value="Genomic_DNA"/>
</dbReference>
<dbReference type="EMBL" id="AC111177">
    <property type="status" value="NOT_ANNOTATED_CDS"/>
    <property type="molecule type" value="Genomic_DNA"/>
</dbReference>
<dbReference type="EMBL" id="BC136986">
    <property type="protein sequence ID" value="AAI36987.1"/>
    <property type="status" value="ALT_INIT"/>
    <property type="molecule type" value="mRNA"/>
</dbReference>
<dbReference type="CCDS" id="CCDS31404.2"/>
<dbReference type="RefSeq" id="NP_001005179.3">
    <property type="nucleotide sequence ID" value="NM_001005179.4"/>
</dbReference>
<dbReference type="SMR" id="Q8NGH8"/>
<dbReference type="BioGRID" id="125695">
    <property type="interactions" value="1"/>
</dbReference>
<dbReference type="FunCoup" id="Q8NGH8">
    <property type="interactions" value="446"/>
</dbReference>
<dbReference type="STRING" id="9606.ENSP00000328215"/>
<dbReference type="GlyCosmos" id="Q8NGH8">
    <property type="glycosylation" value="2 sites, No reported glycans"/>
</dbReference>
<dbReference type="GlyGen" id="Q8NGH8">
    <property type="glycosylation" value="2 sites"/>
</dbReference>
<dbReference type="BioMuta" id="OR56A4"/>
<dbReference type="DMDM" id="259016292"/>
<dbReference type="MassIVE" id="Q8NGH8"/>
<dbReference type="PaxDb" id="9606-ENSP00000328215"/>
<dbReference type="PeptideAtlas" id="Q8NGH8"/>
<dbReference type="ProteomicsDB" id="73515"/>
<dbReference type="Antibodypedia" id="23754">
    <property type="antibodies" value="13 antibodies from 8 providers"/>
</dbReference>
<dbReference type="DNASU" id="120793"/>
<dbReference type="Ensembl" id="ENST00000641156.1">
    <property type="protein sequence ID" value="ENSP00000492932.1"/>
    <property type="gene ID" value="ENSG00000183389.5"/>
</dbReference>
<dbReference type="Ensembl" id="ENST00000641279.1">
    <property type="protein sequence ID" value="ENSP00000492934.1"/>
    <property type="gene ID" value="ENSG00000183389.5"/>
</dbReference>
<dbReference type="Ensembl" id="ENST00000641835.1">
    <property type="protein sequence ID" value="ENSP00000493371.1"/>
    <property type="gene ID" value="ENSG00000183389.5"/>
</dbReference>
<dbReference type="GeneID" id="120793"/>
<dbReference type="KEGG" id="hsa:120793"/>
<dbReference type="MANE-Select" id="ENST00000641156.1">
    <property type="protein sequence ID" value="ENSP00000492932.1"/>
    <property type="RefSeq nucleotide sequence ID" value="NM_001005179.4"/>
    <property type="RefSeq protein sequence ID" value="NP_001005179.3"/>
</dbReference>
<dbReference type="UCSC" id="uc010qzv.3">
    <property type="organism name" value="human"/>
</dbReference>
<dbReference type="AGR" id="HGNC:14791"/>
<dbReference type="CTD" id="120793"/>
<dbReference type="GeneCards" id="OR56A4"/>
<dbReference type="HGNC" id="HGNC:14791">
    <property type="gene designation" value="OR56A4"/>
</dbReference>
<dbReference type="HPA" id="ENSG00000183389">
    <property type="expression patterns" value="Not detected"/>
</dbReference>
<dbReference type="neXtProt" id="NX_Q8NGH8"/>
<dbReference type="OpenTargets" id="ENSG00000183389"/>
<dbReference type="PharmGKB" id="PA32446"/>
<dbReference type="VEuPathDB" id="HostDB:ENSG00000183389"/>
<dbReference type="eggNOG" id="ENOG502SJUD">
    <property type="taxonomic scope" value="Eukaryota"/>
</dbReference>
<dbReference type="GeneTree" id="ENSGT00940000161235"/>
<dbReference type="HOGENOM" id="CLU_012526_0_0_1"/>
<dbReference type="InParanoid" id="Q8NGH8"/>
<dbReference type="OrthoDB" id="5969463at2759"/>
<dbReference type="PAN-GO" id="Q8NGH8">
    <property type="GO annotations" value="2 GO annotations based on evolutionary models"/>
</dbReference>
<dbReference type="PhylomeDB" id="Q8NGH8"/>
<dbReference type="TreeFam" id="TF344049"/>
<dbReference type="PathwayCommons" id="Q8NGH8"/>
<dbReference type="Reactome" id="R-HSA-381753">
    <property type="pathway name" value="Olfactory Signaling Pathway"/>
</dbReference>
<dbReference type="Reactome" id="R-HSA-9752946">
    <property type="pathway name" value="Expression and translocation of olfactory receptors"/>
</dbReference>
<dbReference type="SignaLink" id="Q8NGH8"/>
<dbReference type="BioGRID-ORCS" id="120793">
    <property type="hits" value="7 hits in 738 CRISPR screens"/>
</dbReference>
<dbReference type="GeneWiki" id="OR56A4"/>
<dbReference type="GenomeRNAi" id="120793"/>
<dbReference type="Pharos" id="Q8NGH8">
    <property type="development level" value="Tdark"/>
</dbReference>
<dbReference type="PRO" id="PR:Q8NGH8"/>
<dbReference type="Proteomes" id="UP000005640">
    <property type="component" value="Chromosome 11"/>
</dbReference>
<dbReference type="RNAct" id="Q8NGH8">
    <property type="molecule type" value="protein"/>
</dbReference>
<dbReference type="Bgee" id="ENSG00000183389">
    <property type="expression patterns" value="Expressed in male germ line stem cell (sensu Vertebrata) in testis"/>
</dbReference>
<dbReference type="ExpressionAtlas" id="Q8NGH8">
    <property type="expression patterns" value="baseline and differential"/>
</dbReference>
<dbReference type="GO" id="GO:0005886">
    <property type="term" value="C:plasma membrane"/>
    <property type="evidence" value="ECO:0000318"/>
    <property type="project" value="GO_Central"/>
</dbReference>
<dbReference type="GO" id="GO:0004930">
    <property type="term" value="F:G protein-coupled receptor activity"/>
    <property type="evidence" value="ECO:0007669"/>
    <property type="project" value="UniProtKB-KW"/>
</dbReference>
<dbReference type="GO" id="GO:0004984">
    <property type="term" value="F:olfactory receptor activity"/>
    <property type="evidence" value="ECO:0000318"/>
    <property type="project" value="GO_Central"/>
</dbReference>
<dbReference type="FunFam" id="1.20.1070.10:FF:000002">
    <property type="entry name" value="Olfactory receptor"/>
    <property type="match status" value="1"/>
</dbReference>
<dbReference type="Gene3D" id="1.20.1070.10">
    <property type="entry name" value="Rhodopsin 7-helix transmembrane proteins"/>
    <property type="match status" value="1"/>
</dbReference>
<dbReference type="InterPro" id="IPR000276">
    <property type="entry name" value="GPCR_Rhodpsn"/>
</dbReference>
<dbReference type="InterPro" id="IPR017452">
    <property type="entry name" value="GPCR_Rhodpsn_7TM"/>
</dbReference>
<dbReference type="InterPro" id="IPR000725">
    <property type="entry name" value="Olfact_rcpt"/>
</dbReference>
<dbReference type="InterPro" id="IPR050402">
    <property type="entry name" value="OR51/52/56-like"/>
</dbReference>
<dbReference type="PANTHER" id="PTHR26450:SF428">
    <property type="entry name" value="OLFACTORY RECEPTOR 56A4"/>
    <property type="match status" value="1"/>
</dbReference>
<dbReference type="PANTHER" id="PTHR26450">
    <property type="entry name" value="OLFACTORY RECEPTOR 56B1-RELATED"/>
    <property type="match status" value="1"/>
</dbReference>
<dbReference type="Pfam" id="PF13853">
    <property type="entry name" value="7tm_4"/>
    <property type="match status" value="1"/>
</dbReference>
<dbReference type="PRINTS" id="PR00237">
    <property type="entry name" value="GPCRRHODOPSN"/>
</dbReference>
<dbReference type="PRINTS" id="PR00245">
    <property type="entry name" value="OLFACTORYR"/>
</dbReference>
<dbReference type="SUPFAM" id="SSF81321">
    <property type="entry name" value="Family A G protein-coupled receptor-like"/>
    <property type="match status" value="1"/>
</dbReference>
<dbReference type="PROSITE" id="PS50262">
    <property type="entry name" value="G_PROTEIN_RECEP_F1_2"/>
    <property type="match status" value="1"/>
</dbReference>
<gene>
    <name type="primary">OR56A4</name>
</gene>
<name>O56A4_HUMAN</name>
<reference key="1">
    <citation type="submission" date="2001-07" db="EMBL/GenBank/DDBJ databases">
        <title>Genome-wide discovery and analysis of human seven transmembrane helix receptor genes.</title>
        <authorList>
            <person name="Suwa M."/>
            <person name="Sato T."/>
            <person name="Okouchi I."/>
            <person name="Arita M."/>
            <person name="Futami K."/>
            <person name="Matsumoto S."/>
            <person name="Tsutsumi S."/>
            <person name="Aburatani H."/>
            <person name="Asai K."/>
            <person name="Akiyama Y."/>
        </authorList>
    </citation>
    <scope>NUCLEOTIDE SEQUENCE [GENOMIC DNA]</scope>
</reference>
<reference key="2">
    <citation type="journal article" date="2006" name="Nature">
        <title>Human chromosome 11 DNA sequence and analysis including novel gene identification.</title>
        <authorList>
            <person name="Taylor T.D."/>
            <person name="Noguchi H."/>
            <person name="Totoki Y."/>
            <person name="Toyoda A."/>
            <person name="Kuroki Y."/>
            <person name="Dewar K."/>
            <person name="Lloyd C."/>
            <person name="Itoh T."/>
            <person name="Takeda T."/>
            <person name="Kim D.-W."/>
            <person name="She X."/>
            <person name="Barlow K.F."/>
            <person name="Bloom T."/>
            <person name="Bruford E."/>
            <person name="Chang J.L."/>
            <person name="Cuomo C.A."/>
            <person name="Eichler E."/>
            <person name="FitzGerald M.G."/>
            <person name="Jaffe D.B."/>
            <person name="LaButti K."/>
            <person name="Nicol R."/>
            <person name="Park H.-S."/>
            <person name="Seaman C."/>
            <person name="Sougnez C."/>
            <person name="Yang X."/>
            <person name="Zimmer A.R."/>
            <person name="Zody M.C."/>
            <person name="Birren B.W."/>
            <person name="Nusbaum C."/>
            <person name="Fujiyama A."/>
            <person name="Hattori M."/>
            <person name="Rogers J."/>
            <person name="Lander E.S."/>
            <person name="Sakaki Y."/>
        </authorList>
    </citation>
    <scope>NUCLEOTIDE SEQUENCE [LARGE SCALE GENOMIC DNA]</scope>
</reference>
<reference key="3">
    <citation type="journal article" date="2004" name="Genome Res.">
        <title>The status, quality, and expansion of the NIH full-length cDNA project: the Mammalian Gene Collection (MGC).</title>
        <authorList>
            <consortium name="The MGC Project Team"/>
        </authorList>
    </citation>
    <scope>NUCLEOTIDE SEQUENCE [LARGE SCALE MRNA]</scope>
    <source>
        <tissue>Testis</tissue>
    </source>
</reference>
<keyword id="KW-1003">Cell membrane</keyword>
<keyword id="KW-1015">Disulfide bond</keyword>
<keyword id="KW-0297">G-protein coupled receptor</keyword>
<keyword id="KW-0325">Glycoprotein</keyword>
<keyword id="KW-0472">Membrane</keyword>
<keyword id="KW-0552">Olfaction</keyword>
<keyword id="KW-0675">Receptor</keyword>
<keyword id="KW-1185">Reference proteome</keyword>
<keyword id="KW-0716">Sensory transduction</keyword>
<keyword id="KW-0807">Transducer</keyword>
<keyword id="KW-0812">Transmembrane</keyword>
<keyword id="KW-1133">Transmembrane helix</keyword>
<proteinExistence type="evidence at transcript level"/>
<accession>Q8NGH8</accession>
<accession>B9EH17</accession>
<comment type="function">
    <text evidence="3">Odorant receptor.</text>
</comment>
<comment type="subcellular location">
    <subcellularLocation>
        <location>Cell membrane</location>
        <topology>Multi-pass membrane protein</topology>
    </subcellularLocation>
</comment>
<comment type="similarity">
    <text evidence="2">Belongs to the G-protein coupled receptor 1 family.</text>
</comment>
<comment type="sequence caution" evidence="3">
    <conflict type="erroneous initiation">
        <sequence resource="EMBL-CDS" id="AAI36987"/>
    </conflict>
</comment>
<comment type="online information" name="Human Olfactory Receptor Data Exploratorium (HORDE)">
    <link uri="http://genome.weizmann.ac.il/horde/card/index/symbol:OR56A4"/>
</comment>